<accession>Q38VS5</accession>
<comment type="function">
    <text evidence="2">Involved in base excision repair of DNA damaged by oxidation or by mutagenic agents. Acts as a DNA glycosylase that recognizes and removes damaged bases. Has a preference for oxidized purines, such as 7,8-dihydro-8-oxoguanine (8-oxoG). Has AP (apurinic/apyrimidinic) lyase activity and introduces nicks in the DNA strand. Cleaves the DNA backbone by beta-delta elimination to generate a single-strand break at the site of the removed base with both 3'- and 5'-phosphates.</text>
</comment>
<comment type="catalytic activity">
    <reaction evidence="2">
        <text>Hydrolysis of DNA containing ring-opened 7-methylguanine residues, releasing 2,6-diamino-4-hydroxy-5-(N-methyl)formamidopyrimidine.</text>
        <dbReference type="EC" id="3.2.2.23"/>
    </reaction>
</comment>
<comment type="catalytic activity">
    <reaction evidence="2">
        <text>2'-deoxyribonucleotide-(2'-deoxyribose 5'-phosphate)-2'-deoxyribonucleotide-DNA = a 3'-end 2'-deoxyribonucleotide-(2,3-dehydro-2,3-deoxyribose 5'-phosphate)-DNA + a 5'-end 5'-phospho-2'-deoxyribonucleoside-DNA + H(+)</text>
        <dbReference type="Rhea" id="RHEA:66592"/>
        <dbReference type="Rhea" id="RHEA-COMP:13180"/>
        <dbReference type="Rhea" id="RHEA-COMP:16897"/>
        <dbReference type="Rhea" id="RHEA-COMP:17067"/>
        <dbReference type="ChEBI" id="CHEBI:15378"/>
        <dbReference type="ChEBI" id="CHEBI:136412"/>
        <dbReference type="ChEBI" id="CHEBI:157695"/>
        <dbReference type="ChEBI" id="CHEBI:167181"/>
        <dbReference type="EC" id="4.2.99.18"/>
    </reaction>
</comment>
<comment type="cofactor">
    <cofactor evidence="2">
        <name>Zn(2+)</name>
        <dbReference type="ChEBI" id="CHEBI:29105"/>
    </cofactor>
    <text evidence="2">Binds 1 zinc ion per subunit.</text>
</comment>
<comment type="subunit">
    <text evidence="2">Monomer.</text>
</comment>
<comment type="similarity">
    <text evidence="2">Belongs to the FPG family.</text>
</comment>
<dbReference type="EC" id="3.2.2.23" evidence="2"/>
<dbReference type="EC" id="4.2.99.18" evidence="2"/>
<dbReference type="EMBL" id="CR936503">
    <property type="protein sequence ID" value="CAI55708.1"/>
    <property type="molecule type" value="Genomic_DNA"/>
</dbReference>
<dbReference type="RefSeq" id="WP_011375098.1">
    <property type="nucleotide sequence ID" value="NC_007576.1"/>
</dbReference>
<dbReference type="SMR" id="Q38VS5"/>
<dbReference type="STRING" id="314315.LCA_1405"/>
<dbReference type="KEGG" id="lsa:LCA_1405"/>
<dbReference type="eggNOG" id="COG0266">
    <property type="taxonomic scope" value="Bacteria"/>
</dbReference>
<dbReference type="HOGENOM" id="CLU_038423_1_2_9"/>
<dbReference type="OrthoDB" id="9800855at2"/>
<dbReference type="Proteomes" id="UP000002707">
    <property type="component" value="Chromosome"/>
</dbReference>
<dbReference type="GO" id="GO:0034039">
    <property type="term" value="F:8-oxo-7,8-dihydroguanine DNA N-glycosylase activity"/>
    <property type="evidence" value="ECO:0007669"/>
    <property type="project" value="TreeGrafter"/>
</dbReference>
<dbReference type="GO" id="GO:0140078">
    <property type="term" value="F:class I DNA-(apurinic or apyrimidinic site) endonuclease activity"/>
    <property type="evidence" value="ECO:0007669"/>
    <property type="project" value="UniProtKB-EC"/>
</dbReference>
<dbReference type="GO" id="GO:0003684">
    <property type="term" value="F:damaged DNA binding"/>
    <property type="evidence" value="ECO:0007669"/>
    <property type="project" value="InterPro"/>
</dbReference>
<dbReference type="GO" id="GO:0008270">
    <property type="term" value="F:zinc ion binding"/>
    <property type="evidence" value="ECO:0007669"/>
    <property type="project" value="UniProtKB-UniRule"/>
</dbReference>
<dbReference type="GO" id="GO:0006284">
    <property type="term" value="P:base-excision repair"/>
    <property type="evidence" value="ECO:0007669"/>
    <property type="project" value="InterPro"/>
</dbReference>
<dbReference type="CDD" id="cd08966">
    <property type="entry name" value="EcFpg-like_N"/>
    <property type="match status" value="1"/>
</dbReference>
<dbReference type="FunFam" id="1.10.8.50:FF:000003">
    <property type="entry name" value="Formamidopyrimidine-DNA glycosylase"/>
    <property type="match status" value="1"/>
</dbReference>
<dbReference type="FunFam" id="3.20.190.10:FF:000001">
    <property type="entry name" value="Formamidopyrimidine-DNA glycosylase"/>
    <property type="match status" value="1"/>
</dbReference>
<dbReference type="Gene3D" id="1.10.8.50">
    <property type="match status" value="1"/>
</dbReference>
<dbReference type="Gene3D" id="3.20.190.10">
    <property type="entry name" value="MutM-like, N-terminal"/>
    <property type="match status" value="1"/>
</dbReference>
<dbReference type="HAMAP" id="MF_00103">
    <property type="entry name" value="Fapy_DNA_glycosyl"/>
    <property type="match status" value="1"/>
</dbReference>
<dbReference type="InterPro" id="IPR015886">
    <property type="entry name" value="DNA_glyclase/AP_lyase_DNA-bd"/>
</dbReference>
<dbReference type="InterPro" id="IPR015887">
    <property type="entry name" value="DNA_glyclase_Znf_dom_DNA_BS"/>
</dbReference>
<dbReference type="InterPro" id="IPR020629">
    <property type="entry name" value="Formamido-pyr_DNA_Glyclase"/>
</dbReference>
<dbReference type="InterPro" id="IPR012319">
    <property type="entry name" value="FPG_cat"/>
</dbReference>
<dbReference type="InterPro" id="IPR035937">
    <property type="entry name" value="MutM-like_N-ter"/>
</dbReference>
<dbReference type="InterPro" id="IPR010979">
    <property type="entry name" value="Ribosomal_uS13-like_H2TH"/>
</dbReference>
<dbReference type="InterPro" id="IPR000214">
    <property type="entry name" value="Znf_DNA_glyclase/AP_lyase"/>
</dbReference>
<dbReference type="InterPro" id="IPR010663">
    <property type="entry name" value="Znf_FPG/IleRS"/>
</dbReference>
<dbReference type="NCBIfam" id="TIGR00577">
    <property type="entry name" value="fpg"/>
    <property type="match status" value="1"/>
</dbReference>
<dbReference type="NCBIfam" id="NF002211">
    <property type="entry name" value="PRK01103.1"/>
    <property type="match status" value="1"/>
</dbReference>
<dbReference type="PANTHER" id="PTHR22993">
    <property type="entry name" value="FORMAMIDOPYRIMIDINE-DNA GLYCOSYLASE"/>
    <property type="match status" value="1"/>
</dbReference>
<dbReference type="PANTHER" id="PTHR22993:SF9">
    <property type="entry name" value="FORMAMIDOPYRIMIDINE-DNA GLYCOSYLASE"/>
    <property type="match status" value="1"/>
</dbReference>
<dbReference type="Pfam" id="PF01149">
    <property type="entry name" value="Fapy_DNA_glyco"/>
    <property type="match status" value="1"/>
</dbReference>
<dbReference type="Pfam" id="PF06831">
    <property type="entry name" value="H2TH"/>
    <property type="match status" value="1"/>
</dbReference>
<dbReference type="Pfam" id="PF06827">
    <property type="entry name" value="zf-FPG_IleRS"/>
    <property type="match status" value="1"/>
</dbReference>
<dbReference type="SMART" id="SM00898">
    <property type="entry name" value="Fapy_DNA_glyco"/>
    <property type="match status" value="1"/>
</dbReference>
<dbReference type="SMART" id="SM01232">
    <property type="entry name" value="H2TH"/>
    <property type="match status" value="1"/>
</dbReference>
<dbReference type="SUPFAM" id="SSF57716">
    <property type="entry name" value="Glucocorticoid receptor-like (DNA-binding domain)"/>
    <property type="match status" value="1"/>
</dbReference>
<dbReference type="SUPFAM" id="SSF81624">
    <property type="entry name" value="N-terminal domain of MutM-like DNA repair proteins"/>
    <property type="match status" value="1"/>
</dbReference>
<dbReference type="SUPFAM" id="SSF46946">
    <property type="entry name" value="S13-like H2TH domain"/>
    <property type="match status" value="1"/>
</dbReference>
<dbReference type="PROSITE" id="PS51068">
    <property type="entry name" value="FPG_CAT"/>
    <property type="match status" value="1"/>
</dbReference>
<dbReference type="PROSITE" id="PS01242">
    <property type="entry name" value="ZF_FPG_1"/>
    <property type="match status" value="1"/>
</dbReference>
<dbReference type="PROSITE" id="PS51066">
    <property type="entry name" value="ZF_FPG_2"/>
    <property type="match status" value="1"/>
</dbReference>
<evidence type="ECO:0000250" key="1"/>
<evidence type="ECO:0000255" key="2">
    <source>
        <dbReference type="HAMAP-Rule" id="MF_00103"/>
    </source>
</evidence>
<gene>
    <name evidence="2" type="primary">mutM</name>
    <name evidence="2" type="synonym">fpg</name>
    <name type="ordered locus">LCA_1405</name>
</gene>
<organism>
    <name type="scientific">Latilactobacillus sakei subsp. sakei (strain 23K)</name>
    <name type="common">Lactobacillus sakei subsp. sakei</name>
    <dbReference type="NCBI Taxonomy" id="314315"/>
    <lineage>
        <taxon>Bacteria</taxon>
        <taxon>Bacillati</taxon>
        <taxon>Bacillota</taxon>
        <taxon>Bacilli</taxon>
        <taxon>Lactobacillales</taxon>
        <taxon>Lactobacillaceae</taxon>
        <taxon>Latilactobacillus</taxon>
    </lineage>
</organism>
<protein>
    <recommendedName>
        <fullName evidence="2">Formamidopyrimidine-DNA glycosylase</fullName>
        <shortName evidence="2">Fapy-DNA glycosylase</shortName>
        <ecNumber evidence="2">3.2.2.23</ecNumber>
    </recommendedName>
    <alternativeName>
        <fullName evidence="2">DNA-(apurinic or apyrimidinic site) lyase MutM</fullName>
        <shortName evidence="2">AP lyase MutM</shortName>
        <ecNumber evidence="2">4.2.99.18</ecNumber>
    </alternativeName>
</protein>
<sequence>MPELPEVENVRRGLETLAVGKTVSAIDIRWSKIIVNPDEVFTAGLVGQQITAVDRRGKYLLIRFGEQLTVVSHLRMEGKYEVVAKEAPISKHTHVIFEFTDGQQMRYLDTRKFGRMQLIETGQENTVAGLKDLGPEPTPTTFLKADFYQRLQKHHKAIKPLLLDQKVVTGLGNIYVDETLWLSHIHPETPANDLTRAETDRLHDEIIAELELAINHGGTTVNTFLNATGHAGAFQEMLHVYGKKGVPCERCGTPIEKIKVAQRGTHFCPKCQIKRNAK</sequence>
<feature type="initiator methionine" description="Removed" evidence="1">
    <location>
        <position position="1"/>
    </location>
</feature>
<feature type="chain" id="PRO_0000228442" description="Formamidopyrimidine-DNA glycosylase">
    <location>
        <begin position="2"/>
        <end position="278"/>
    </location>
</feature>
<feature type="zinc finger region" description="FPG-type" evidence="2">
    <location>
        <begin position="239"/>
        <end position="273"/>
    </location>
</feature>
<feature type="active site" description="Schiff-base intermediate with DNA" evidence="2">
    <location>
        <position position="2"/>
    </location>
</feature>
<feature type="active site" description="Proton donor" evidence="2">
    <location>
        <position position="3"/>
    </location>
</feature>
<feature type="active site" description="Proton donor; for beta-elimination activity" evidence="2">
    <location>
        <position position="58"/>
    </location>
</feature>
<feature type="active site" description="Proton donor; for delta-elimination activity" evidence="2">
    <location>
        <position position="263"/>
    </location>
</feature>
<feature type="binding site" evidence="2">
    <location>
        <position position="92"/>
    </location>
    <ligand>
        <name>DNA</name>
        <dbReference type="ChEBI" id="CHEBI:16991"/>
    </ligand>
</feature>
<feature type="binding site" evidence="2">
    <location>
        <position position="111"/>
    </location>
    <ligand>
        <name>DNA</name>
        <dbReference type="ChEBI" id="CHEBI:16991"/>
    </ligand>
</feature>
<keyword id="KW-0227">DNA damage</keyword>
<keyword id="KW-0234">DNA repair</keyword>
<keyword id="KW-0238">DNA-binding</keyword>
<keyword id="KW-0326">Glycosidase</keyword>
<keyword id="KW-0378">Hydrolase</keyword>
<keyword id="KW-0456">Lyase</keyword>
<keyword id="KW-0479">Metal-binding</keyword>
<keyword id="KW-0511">Multifunctional enzyme</keyword>
<keyword id="KW-1185">Reference proteome</keyword>
<keyword id="KW-0862">Zinc</keyword>
<keyword id="KW-0863">Zinc-finger</keyword>
<reference key="1">
    <citation type="journal article" date="2005" name="Nat. Biotechnol.">
        <title>The complete genome sequence of the meat-borne lactic acid bacterium Lactobacillus sakei 23K.</title>
        <authorList>
            <person name="Chaillou S."/>
            <person name="Champomier-Verges M.-C."/>
            <person name="Cornet M."/>
            <person name="Crutz-Le Coq A.-M."/>
            <person name="Dudez A.-M."/>
            <person name="Martin V."/>
            <person name="Beaufils S."/>
            <person name="Darbon-Rongere E."/>
            <person name="Bossy R."/>
            <person name="Loux V."/>
            <person name="Zagorec M."/>
        </authorList>
    </citation>
    <scope>NUCLEOTIDE SEQUENCE [LARGE SCALE GENOMIC DNA]</scope>
    <source>
        <strain>23K</strain>
    </source>
</reference>
<name>FPG_LATSS</name>
<proteinExistence type="inferred from homology"/>